<gene>
    <name type="primary">yeiH</name>
    <name type="ordered locus">SF2243</name>
    <name type="ordered locus">S2372</name>
</gene>
<dbReference type="EMBL" id="AE005674">
    <property type="protein sequence ID" value="AAN43762.1"/>
    <property type="molecule type" value="Genomic_DNA"/>
</dbReference>
<dbReference type="EMBL" id="AE014073">
    <property type="protein sequence ID" value="AAP17579.1"/>
    <property type="molecule type" value="Genomic_DNA"/>
</dbReference>
<dbReference type="RefSeq" id="NP_708055.1">
    <property type="nucleotide sequence ID" value="NC_004337.2"/>
</dbReference>
<dbReference type="RefSeq" id="WP_000182053.1">
    <property type="nucleotide sequence ID" value="NZ_WPGW01000017.1"/>
</dbReference>
<dbReference type="SMR" id="P62725"/>
<dbReference type="STRING" id="198214.SF2243"/>
<dbReference type="PaxDb" id="198214-SF2243"/>
<dbReference type="GeneID" id="1025420"/>
<dbReference type="KEGG" id="sfl:SF2243"/>
<dbReference type="KEGG" id="sfx:S2372"/>
<dbReference type="PATRIC" id="fig|198214.7.peg.2688"/>
<dbReference type="HOGENOM" id="CLU_033541_0_0_6"/>
<dbReference type="Proteomes" id="UP000001006">
    <property type="component" value="Chromosome"/>
</dbReference>
<dbReference type="Proteomes" id="UP000002673">
    <property type="component" value="Chromosome"/>
</dbReference>
<dbReference type="GO" id="GO:0005886">
    <property type="term" value="C:plasma membrane"/>
    <property type="evidence" value="ECO:0007669"/>
    <property type="project" value="UniProtKB-SubCell"/>
</dbReference>
<dbReference type="InterPro" id="IPR018383">
    <property type="entry name" value="UPF0324_pro"/>
</dbReference>
<dbReference type="InterPro" id="IPR004630">
    <property type="entry name" value="UPF0324_YeiH-like"/>
</dbReference>
<dbReference type="NCBIfam" id="TIGR00698">
    <property type="entry name" value="YeiH family putative sulfate export transporter"/>
    <property type="match status" value="1"/>
</dbReference>
<dbReference type="PANTHER" id="PTHR30106">
    <property type="entry name" value="INNER MEMBRANE PROTEIN YEIH-RELATED"/>
    <property type="match status" value="1"/>
</dbReference>
<dbReference type="PANTHER" id="PTHR30106:SF2">
    <property type="entry name" value="UPF0324 INNER MEMBRANE PROTEIN YEIH"/>
    <property type="match status" value="1"/>
</dbReference>
<dbReference type="Pfam" id="PF03601">
    <property type="entry name" value="Cons_hypoth698"/>
    <property type="match status" value="1"/>
</dbReference>
<proteinExistence type="inferred from homology"/>
<feature type="chain" id="PRO_0000157450" description="UPF0324 membrane protein YeiH">
    <location>
        <begin position="1"/>
        <end position="349"/>
    </location>
</feature>
<feature type="transmembrane region" description="Helical" evidence="1">
    <location>
        <begin position="13"/>
        <end position="32"/>
    </location>
</feature>
<feature type="transmembrane region" description="Helical" evidence="1">
    <location>
        <begin position="36"/>
        <end position="58"/>
    </location>
</feature>
<feature type="transmembrane region" description="Helical" evidence="1">
    <location>
        <begin position="100"/>
        <end position="122"/>
    </location>
</feature>
<feature type="transmembrane region" description="Helical" evidence="1">
    <location>
        <begin position="132"/>
        <end position="151"/>
    </location>
</feature>
<feature type="transmembrane region" description="Helical" evidence="1">
    <location>
        <begin position="163"/>
        <end position="185"/>
    </location>
</feature>
<feature type="transmembrane region" description="Helical" evidence="1">
    <location>
        <begin position="262"/>
        <end position="283"/>
    </location>
</feature>
<feature type="transmembrane region" description="Helical" evidence="1">
    <location>
        <begin position="290"/>
        <end position="312"/>
    </location>
</feature>
<feature type="transmembrane region" description="Helical" evidence="1">
    <location>
        <begin position="322"/>
        <end position="344"/>
    </location>
</feature>
<protein>
    <recommendedName>
        <fullName>UPF0324 membrane protein YeiH</fullName>
    </recommendedName>
</protein>
<reference key="1">
    <citation type="journal article" date="2002" name="Nucleic Acids Res.">
        <title>Genome sequence of Shigella flexneri 2a: insights into pathogenicity through comparison with genomes of Escherichia coli K12 and O157.</title>
        <authorList>
            <person name="Jin Q."/>
            <person name="Yuan Z."/>
            <person name="Xu J."/>
            <person name="Wang Y."/>
            <person name="Shen Y."/>
            <person name="Lu W."/>
            <person name="Wang J."/>
            <person name="Liu H."/>
            <person name="Yang J."/>
            <person name="Yang F."/>
            <person name="Zhang X."/>
            <person name="Zhang J."/>
            <person name="Yang G."/>
            <person name="Wu H."/>
            <person name="Qu D."/>
            <person name="Dong J."/>
            <person name="Sun L."/>
            <person name="Xue Y."/>
            <person name="Zhao A."/>
            <person name="Gao Y."/>
            <person name="Zhu J."/>
            <person name="Kan B."/>
            <person name="Ding K."/>
            <person name="Chen S."/>
            <person name="Cheng H."/>
            <person name="Yao Z."/>
            <person name="He B."/>
            <person name="Chen R."/>
            <person name="Ma D."/>
            <person name="Qiang B."/>
            <person name="Wen Y."/>
            <person name="Hou Y."/>
            <person name="Yu J."/>
        </authorList>
    </citation>
    <scope>NUCLEOTIDE SEQUENCE [LARGE SCALE GENOMIC DNA]</scope>
    <source>
        <strain>301 / Serotype 2a</strain>
    </source>
</reference>
<reference key="2">
    <citation type="journal article" date="2003" name="Infect. Immun.">
        <title>Complete genome sequence and comparative genomics of Shigella flexneri serotype 2a strain 2457T.</title>
        <authorList>
            <person name="Wei J."/>
            <person name="Goldberg M.B."/>
            <person name="Burland V."/>
            <person name="Venkatesan M.M."/>
            <person name="Deng W."/>
            <person name="Fournier G."/>
            <person name="Mayhew G.F."/>
            <person name="Plunkett G. III"/>
            <person name="Rose D.J."/>
            <person name="Darling A."/>
            <person name="Mau B."/>
            <person name="Perna N.T."/>
            <person name="Payne S.M."/>
            <person name="Runyen-Janecky L.J."/>
            <person name="Zhou S."/>
            <person name="Schwartz D.C."/>
            <person name="Blattner F.R."/>
        </authorList>
    </citation>
    <scope>NUCLEOTIDE SEQUENCE [LARGE SCALE GENOMIC DNA]</scope>
    <source>
        <strain>ATCC 700930 / 2457T / Serotype 2a</strain>
    </source>
</reference>
<keyword id="KW-1003">Cell membrane</keyword>
<keyword id="KW-0472">Membrane</keyword>
<keyword id="KW-1185">Reference proteome</keyword>
<keyword id="KW-0812">Transmembrane</keyword>
<keyword id="KW-1133">Transmembrane helix</keyword>
<organism>
    <name type="scientific">Shigella flexneri</name>
    <dbReference type="NCBI Taxonomy" id="623"/>
    <lineage>
        <taxon>Bacteria</taxon>
        <taxon>Pseudomonadati</taxon>
        <taxon>Pseudomonadota</taxon>
        <taxon>Gammaproteobacteria</taxon>
        <taxon>Enterobacterales</taxon>
        <taxon>Enterobacteriaceae</taxon>
        <taxon>Shigella</taxon>
    </lineage>
</organism>
<evidence type="ECO:0000255" key="1"/>
<evidence type="ECO:0000305" key="2"/>
<sequence length="349" mass="36882">MTNITLQKQHRTLWHFIPGLALSAVITGVALWGGSIPAVAGAGFSALTLAILLGMVLGNTIYPHIWKSCDGGVLFAKQYLLRLGIILYGFRLTFSQIADVGISGIIIDVLTLSSTFLLACFLGQKVFGLDKHTSWLIGAGSSICGAAAVLATEPVVKAEASKVTVAVATVVIFGTVAIFLYPAIYPLMSQWFSPETFGIYIGSTVHEVAQVVAAGHAISPDAENAAVISKMLRVMMLAPFLILLAARVKQLSGANSGEKSKITIPWFAILFIVVAIFNSFHLLPQSVVNMLVTLDTFLLAMAMAALGLTTHVSALKKAGAKPLLMALVLFAWLIVGGGAINYVIQSVIA</sequence>
<comment type="subcellular location">
    <subcellularLocation>
        <location evidence="2">Cell membrane</location>
        <topology evidence="2">Multi-pass membrane protein</topology>
    </subcellularLocation>
</comment>
<comment type="similarity">
    <text evidence="2">Belongs to the UPF0324 family.</text>
</comment>
<accession>P62725</accession>
<accession>P33019</accession>
<name>YEIH_SHIFL</name>